<gene>
    <name evidence="1" type="primary">hfq</name>
    <name type="ordered locus">YPTS_0453</name>
</gene>
<evidence type="ECO:0000255" key="1">
    <source>
        <dbReference type="HAMAP-Rule" id="MF_00436"/>
    </source>
</evidence>
<evidence type="ECO:0000255" key="2">
    <source>
        <dbReference type="PROSITE-ProRule" id="PRU01346"/>
    </source>
</evidence>
<evidence type="ECO:0000256" key="3">
    <source>
        <dbReference type="SAM" id="MobiDB-lite"/>
    </source>
</evidence>
<comment type="function">
    <text evidence="1">RNA chaperone that binds small regulatory RNA (sRNAs) and mRNAs to facilitate mRNA translational regulation in response to envelope stress, environmental stress and changes in metabolite concentrations. Also binds with high specificity to tRNAs.</text>
</comment>
<comment type="subunit">
    <text evidence="1">Homohexamer.</text>
</comment>
<comment type="similarity">
    <text evidence="1">Belongs to the Hfq family.</text>
</comment>
<name>HFQ_YERPB</name>
<protein>
    <recommendedName>
        <fullName evidence="1">RNA-binding protein Hfq</fullName>
    </recommendedName>
</protein>
<sequence>MAKGQSLQDPFLNALRRERVPVSIYLVNGIKLQGQVESFDQFVILLKNTVSQMVYKHAISTVVPSRPVSHHSNTPSGSTNNYHGSNPSAPQQPQQDSDDAE</sequence>
<feature type="chain" id="PRO_1000190372" description="RNA-binding protein Hfq">
    <location>
        <begin position="1"/>
        <end position="101"/>
    </location>
</feature>
<feature type="domain" description="Sm" evidence="2">
    <location>
        <begin position="9"/>
        <end position="68"/>
    </location>
</feature>
<feature type="region of interest" description="Disordered" evidence="3">
    <location>
        <begin position="63"/>
        <end position="101"/>
    </location>
</feature>
<feature type="compositionally biased region" description="Polar residues" evidence="3">
    <location>
        <begin position="70"/>
        <end position="86"/>
    </location>
</feature>
<dbReference type="EMBL" id="CP001048">
    <property type="protein sequence ID" value="ACC87439.1"/>
    <property type="molecule type" value="Genomic_DNA"/>
</dbReference>
<dbReference type="RefSeq" id="WP_002209151.1">
    <property type="nucleotide sequence ID" value="NZ_CP009780.1"/>
</dbReference>
<dbReference type="SMR" id="B2K204"/>
<dbReference type="GeneID" id="58049160"/>
<dbReference type="KEGG" id="ypb:YPTS_0453"/>
<dbReference type="PATRIC" id="fig|502801.10.peg.4128"/>
<dbReference type="GO" id="GO:0005829">
    <property type="term" value="C:cytosol"/>
    <property type="evidence" value="ECO:0007669"/>
    <property type="project" value="TreeGrafter"/>
</dbReference>
<dbReference type="GO" id="GO:0003723">
    <property type="term" value="F:RNA binding"/>
    <property type="evidence" value="ECO:0007669"/>
    <property type="project" value="UniProtKB-UniRule"/>
</dbReference>
<dbReference type="GO" id="GO:0006355">
    <property type="term" value="P:regulation of DNA-templated transcription"/>
    <property type="evidence" value="ECO:0007669"/>
    <property type="project" value="InterPro"/>
</dbReference>
<dbReference type="GO" id="GO:0043487">
    <property type="term" value="P:regulation of RNA stability"/>
    <property type="evidence" value="ECO:0007669"/>
    <property type="project" value="TreeGrafter"/>
</dbReference>
<dbReference type="GO" id="GO:0045974">
    <property type="term" value="P:regulation of translation, ncRNA-mediated"/>
    <property type="evidence" value="ECO:0007669"/>
    <property type="project" value="TreeGrafter"/>
</dbReference>
<dbReference type="CDD" id="cd01716">
    <property type="entry name" value="Hfq"/>
    <property type="match status" value="1"/>
</dbReference>
<dbReference type="FunFam" id="2.30.30.100:FF:000001">
    <property type="entry name" value="RNA-binding protein Hfq"/>
    <property type="match status" value="1"/>
</dbReference>
<dbReference type="Gene3D" id="2.30.30.100">
    <property type="match status" value="1"/>
</dbReference>
<dbReference type="HAMAP" id="MF_00436">
    <property type="entry name" value="Hfq"/>
    <property type="match status" value="1"/>
</dbReference>
<dbReference type="InterPro" id="IPR005001">
    <property type="entry name" value="Hfq"/>
</dbReference>
<dbReference type="InterPro" id="IPR010920">
    <property type="entry name" value="LSM_dom_sf"/>
</dbReference>
<dbReference type="InterPro" id="IPR047575">
    <property type="entry name" value="Sm"/>
</dbReference>
<dbReference type="NCBIfam" id="TIGR02383">
    <property type="entry name" value="Hfq"/>
    <property type="match status" value="1"/>
</dbReference>
<dbReference type="NCBIfam" id="NF001602">
    <property type="entry name" value="PRK00395.1"/>
    <property type="match status" value="1"/>
</dbReference>
<dbReference type="PANTHER" id="PTHR34772">
    <property type="entry name" value="RNA-BINDING PROTEIN HFQ"/>
    <property type="match status" value="1"/>
</dbReference>
<dbReference type="PANTHER" id="PTHR34772:SF1">
    <property type="entry name" value="RNA-BINDING PROTEIN HFQ"/>
    <property type="match status" value="1"/>
</dbReference>
<dbReference type="Pfam" id="PF17209">
    <property type="entry name" value="Hfq"/>
    <property type="match status" value="1"/>
</dbReference>
<dbReference type="SUPFAM" id="SSF50182">
    <property type="entry name" value="Sm-like ribonucleoproteins"/>
    <property type="match status" value="1"/>
</dbReference>
<dbReference type="PROSITE" id="PS52002">
    <property type="entry name" value="SM"/>
    <property type="match status" value="1"/>
</dbReference>
<proteinExistence type="inferred from homology"/>
<organism>
    <name type="scientific">Yersinia pseudotuberculosis serotype IB (strain PB1/+)</name>
    <dbReference type="NCBI Taxonomy" id="502801"/>
    <lineage>
        <taxon>Bacteria</taxon>
        <taxon>Pseudomonadati</taxon>
        <taxon>Pseudomonadota</taxon>
        <taxon>Gammaproteobacteria</taxon>
        <taxon>Enterobacterales</taxon>
        <taxon>Yersiniaceae</taxon>
        <taxon>Yersinia</taxon>
    </lineage>
</organism>
<reference key="1">
    <citation type="submission" date="2008-04" db="EMBL/GenBank/DDBJ databases">
        <title>Complete sequence of Yersinia pseudotuberculosis PB1/+.</title>
        <authorList>
            <person name="Copeland A."/>
            <person name="Lucas S."/>
            <person name="Lapidus A."/>
            <person name="Glavina del Rio T."/>
            <person name="Dalin E."/>
            <person name="Tice H."/>
            <person name="Bruce D."/>
            <person name="Goodwin L."/>
            <person name="Pitluck S."/>
            <person name="Munk A.C."/>
            <person name="Brettin T."/>
            <person name="Detter J.C."/>
            <person name="Han C."/>
            <person name="Tapia R."/>
            <person name="Schmutz J."/>
            <person name="Larimer F."/>
            <person name="Land M."/>
            <person name="Hauser L."/>
            <person name="Challacombe J.F."/>
            <person name="Green L."/>
            <person name="Lindler L.E."/>
            <person name="Nikolich M.P."/>
            <person name="Richardson P."/>
        </authorList>
    </citation>
    <scope>NUCLEOTIDE SEQUENCE [LARGE SCALE GENOMIC DNA]</scope>
    <source>
        <strain>PB1/+</strain>
    </source>
</reference>
<keyword id="KW-0694">RNA-binding</keyword>
<keyword id="KW-0346">Stress response</keyword>
<accession>B2K204</accession>